<accession>Q03L13</accession>
<keyword id="KW-0963">Cytoplasm</keyword>
<keyword id="KW-0521">NADP</keyword>
<keyword id="KW-0560">Oxidoreductase</keyword>
<keyword id="KW-0671">Queuosine biosynthesis</keyword>
<comment type="function">
    <text evidence="1">Catalyzes the NADPH-dependent reduction of 7-cyano-7-deazaguanine (preQ0) to 7-aminomethyl-7-deazaguanine (preQ1).</text>
</comment>
<comment type="catalytic activity">
    <reaction evidence="1">
        <text>7-aminomethyl-7-carbaguanine + 2 NADP(+) = 7-cyano-7-deazaguanine + 2 NADPH + 3 H(+)</text>
        <dbReference type="Rhea" id="RHEA:13409"/>
        <dbReference type="ChEBI" id="CHEBI:15378"/>
        <dbReference type="ChEBI" id="CHEBI:45075"/>
        <dbReference type="ChEBI" id="CHEBI:57783"/>
        <dbReference type="ChEBI" id="CHEBI:58349"/>
        <dbReference type="ChEBI" id="CHEBI:58703"/>
        <dbReference type="EC" id="1.7.1.13"/>
    </reaction>
</comment>
<comment type="pathway">
    <text evidence="1">tRNA modification; tRNA-queuosine biosynthesis.</text>
</comment>
<comment type="subcellular location">
    <subcellularLocation>
        <location evidence="1">Cytoplasm</location>
    </subcellularLocation>
</comment>
<comment type="similarity">
    <text evidence="1">Belongs to the GTP cyclohydrolase I family. QueF type 1 subfamily.</text>
</comment>
<evidence type="ECO:0000255" key="1">
    <source>
        <dbReference type="HAMAP-Rule" id="MF_00818"/>
    </source>
</evidence>
<organism>
    <name type="scientific">Streptococcus thermophilus (strain ATCC BAA-491 / LMD-9)</name>
    <dbReference type="NCBI Taxonomy" id="322159"/>
    <lineage>
        <taxon>Bacteria</taxon>
        <taxon>Bacillati</taxon>
        <taxon>Bacillota</taxon>
        <taxon>Bacilli</taxon>
        <taxon>Lactobacillales</taxon>
        <taxon>Streptococcaceae</taxon>
        <taxon>Streptococcus</taxon>
    </lineage>
</organism>
<dbReference type="EC" id="1.7.1.13" evidence="1"/>
<dbReference type="EMBL" id="CP000419">
    <property type="protein sequence ID" value="ABJ66109.1"/>
    <property type="molecule type" value="Genomic_DNA"/>
</dbReference>
<dbReference type="RefSeq" id="WP_002946191.1">
    <property type="nucleotide sequence ID" value="NC_008532.1"/>
</dbReference>
<dbReference type="SMR" id="Q03L13"/>
<dbReference type="GeneID" id="66898714"/>
<dbReference type="KEGG" id="ste:STER_0872"/>
<dbReference type="HOGENOM" id="CLU_102489_0_1_9"/>
<dbReference type="UniPathway" id="UPA00392"/>
<dbReference type="GO" id="GO:0005737">
    <property type="term" value="C:cytoplasm"/>
    <property type="evidence" value="ECO:0007669"/>
    <property type="project" value="UniProtKB-SubCell"/>
</dbReference>
<dbReference type="GO" id="GO:0033739">
    <property type="term" value="F:preQ1 synthase activity"/>
    <property type="evidence" value="ECO:0007669"/>
    <property type="project" value="UniProtKB-UniRule"/>
</dbReference>
<dbReference type="GO" id="GO:0008616">
    <property type="term" value="P:queuosine biosynthetic process"/>
    <property type="evidence" value="ECO:0007669"/>
    <property type="project" value="UniProtKB-UniRule"/>
</dbReference>
<dbReference type="GO" id="GO:0006400">
    <property type="term" value="P:tRNA modification"/>
    <property type="evidence" value="ECO:0007669"/>
    <property type="project" value="UniProtKB-UniRule"/>
</dbReference>
<dbReference type="Gene3D" id="3.30.1130.10">
    <property type="match status" value="1"/>
</dbReference>
<dbReference type="HAMAP" id="MF_00818">
    <property type="entry name" value="QueF_type1"/>
    <property type="match status" value="1"/>
</dbReference>
<dbReference type="InterPro" id="IPR043133">
    <property type="entry name" value="GTP-CH-I_C/QueF"/>
</dbReference>
<dbReference type="InterPro" id="IPR050084">
    <property type="entry name" value="NADPH_dep_7-cyano-7-deazaG_red"/>
</dbReference>
<dbReference type="InterPro" id="IPR029500">
    <property type="entry name" value="QueF"/>
</dbReference>
<dbReference type="InterPro" id="IPR016856">
    <property type="entry name" value="QueF_type1"/>
</dbReference>
<dbReference type="NCBIfam" id="TIGR03139">
    <property type="entry name" value="QueF-II"/>
    <property type="match status" value="1"/>
</dbReference>
<dbReference type="PANTHER" id="PTHR34354">
    <property type="entry name" value="NADPH-DEPENDENT 7-CYANO-7-DEAZAGUANINE REDUCTASE"/>
    <property type="match status" value="1"/>
</dbReference>
<dbReference type="PANTHER" id="PTHR34354:SF1">
    <property type="entry name" value="NADPH-DEPENDENT 7-CYANO-7-DEAZAGUANINE REDUCTASE"/>
    <property type="match status" value="1"/>
</dbReference>
<dbReference type="Pfam" id="PF14489">
    <property type="entry name" value="QueF"/>
    <property type="match status" value="1"/>
</dbReference>
<dbReference type="PIRSF" id="PIRSF027377">
    <property type="entry name" value="Nitrile_oxidored_QueF"/>
    <property type="match status" value="1"/>
</dbReference>
<dbReference type="SUPFAM" id="SSF55620">
    <property type="entry name" value="Tetrahydrobiopterin biosynthesis enzymes-like"/>
    <property type="match status" value="1"/>
</dbReference>
<gene>
    <name evidence="1" type="primary">queF</name>
    <name type="ordered locus">STER_0872</name>
</gene>
<feature type="chain" id="PRO_1000062412" description="NADPH-dependent 7-cyano-7-deazaguanine reductase">
    <location>
        <begin position="1"/>
        <end position="163"/>
    </location>
</feature>
<feature type="active site" description="Thioimide intermediate" evidence="1">
    <location>
        <position position="54"/>
    </location>
</feature>
<feature type="active site" description="Proton donor" evidence="1">
    <location>
        <position position="61"/>
    </location>
</feature>
<feature type="binding site" evidence="1">
    <location>
        <begin position="76"/>
        <end position="78"/>
    </location>
    <ligand>
        <name>substrate</name>
    </ligand>
</feature>
<feature type="binding site" evidence="1">
    <location>
        <begin position="95"/>
        <end position="96"/>
    </location>
    <ligand>
        <name>substrate</name>
    </ligand>
</feature>
<sequence>MSQQEEMKNLTLLGSKETPYIFEYSPQVLESFDNRHADNDYFIKFNCPEFTSLCPITGQPDFASIYISYIPDQLCVESKSLKLYLFSYRNHGDFHENCINTIGKDLVELLNPRYLEVWGKFTPRGGISIDPYYNYGRPKTKYENMAEQRLFNHDLYPENIDNR</sequence>
<proteinExistence type="inferred from homology"/>
<name>QUEF_STRTD</name>
<protein>
    <recommendedName>
        <fullName evidence="1">NADPH-dependent 7-cyano-7-deazaguanine reductase</fullName>
        <ecNumber evidence="1">1.7.1.13</ecNumber>
    </recommendedName>
    <alternativeName>
        <fullName evidence="1">7-cyano-7-carbaguanine reductase</fullName>
    </alternativeName>
    <alternativeName>
        <fullName evidence="1">NADPH-dependent nitrile oxidoreductase</fullName>
    </alternativeName>
    <alternativeName>
        <fullName evidence="1">PreQ(0) reductase</fullName>
    </alternativeName>
</protein>
<reference key="1">
    <citation type="journal article" date="2006" name="Proc. Natl. Acad. Sci. U.S.A.">
        <title>Comparative genomics of the lactic acid bacteria.</title>
        <authorList>
            <person name="Makarova K.S."/>
            <person name="Slesarev A."/>
            <person name="Wolf Y.I."/>
            <person name="Sorokin A."/>
            <person name="Mirkin B."/>
            <person name="Koonin E.V."/>
            <person name="Pavlov A."/>
            <person name="Pavlova N."/>
            <person name="Karamychev V."/>
            <person name="Polouchine N."/>
            <person name="Shakhova V."/>
            <person name="Grigoriev I."/>
            <person name="Lou Y."/>
            <person name="Rohksar D."/>
            <person name="Lucas S."/>
            <person name="Huang K."/>
            <person name="Goodstein D.M."/>
            <person name="Hawkins T."/>
            <person name="Plengvidhya V."/>
            <person name="Welker D."/>
            <person name="Hughes J."/>
            <person name="Goh Y."/>
            <person name="Benson A."/>
            <person name="Baldwin K."/>
            <person name="Lee J.-H."/>
            <person name="Diaz-Muniz I."/>
            <person name="Dosti B."/>
            <person name="Smeianov V."/>
            <person name="Wechter W."/>
            <person name="Barabote R."/>
            <person name="Lorca G."/>
            <person name="Altermann E."/>
            <person name="Barrangou R."/>
            <person name="Ganesan B."/>
            <person name="Xie Y."/>
            <person name="Rawsthorne H."/>
            <person name="Tamir D."/>
            <person name="Parker C."/>
            <person name="Breidt F."/>
            <person name="Broadbent J.R."/>
            <person name="Hutkins R."/>
            <person name="O'Sullivan D."/>
            <person name="Steele J."/>
            <person name="Unlu G."/>
            <person name="Saier M.H. Jr."/>
            <person name="Klaenhammer T."/>
            <person name="Richardson P."/>
            <person name="Kozyavkin S."/>
            <person name="Weimer B.C."/>
            <person name="Mills D.A."/>
        </authorList>
    </citation>
    <scope>NUCLEOTIDE SEQUENCE [LARGE SCALE GENOMIC DNA]</scope>
    <source>
        <strain>ATCC BAA-491 / LMD-9</strain>
    </source>
</reference>